<dbReference type="EMBL" id="AF143537">
    <property type="protein sequence ID" value="AAD40476.1"/>
    <property type="molecule type" value="mRNA"/>
</dbReference>
<dbReference type="EMBL" id="CU329670">
    <property type="protein sequence ID" value="CAA91097.2"/>
    <property type="status" value="ALT_SEQ"/>
    <property type="molecule type" value="Genomic_DNA"/>
</dbReference>
<dbReference type="PIR" id="T37639">
    <property type="entry name" value="S62433"/>
</dbReference>
<dbReference type="RefSeq" id="NP_592830.2">
    <property type="nucleotide sequence ID" value="NM_001018231.3"/>
</dbReference>
<dbReference type="SMR" id="Q09783"/>
<dbReference type="FunCoup" id="Q09783">
    <property type="interactions" value="156"/>
</dbReference>
<dbReference type="STRING" id="284812.Q09783"/>
<dbReference type="iPTMnet" id="Q09783"/>
<dbReference type="PaxDb" id="4896-SPAC13G6.04.1"/>
<dbReference type="GeneID" id="2542819"/>
<dbReference type="KEGG" id="spo:2542819"/>
<dbReference type="PomBase" id="SPAC13G6.04">
    <property type="gene designation" value="tim8"/>
</dbReference>
<dbReference type="eggNOG" id="KOG3489">
    <property type="taxonomic scope" value="Eukaryota"/>
</dbReference>
<dbReference type="InParanoid" id="Q09783"/>
<dbReference type="PhylomeDB" id="Q09783"/>
<dbReference type="PRO" id="PR:Q09783"/>
<dbReference type="Proteomes" id="UP000002485">
    <property type="component" value="Chromosome I"/>
</dbReference>
<dbReference type="GO" id="GO:0005829">
    <property type="term" value="C:cytosol"/>
    <property type="evidence" value="ECO:0007005"/>
    <property type="project" value="PomBase"/>
</dbReference>
<dbReference type="GO" id="GO:0005743">
    <property type="term" value="C:mitochondrial inner membrane"/>
    <property type="evidence" value="ECO:0007669"/>
    <property type="project" value="UniProtKB-SubCell"/>
</dbReference>
<dbReference type="GO" id="GO:0042719">
    <property type="term" value="C:mitochondrial intermembrane space protein transporter complex"/>
    <property type="evidence" value="ECO:0000266"/>
    <property type="project" value="PomBase"/>
</dbReference>
<dbReference type="GO" id="GO:0046872">
    <property type="term" value="F:metal ion binding"/>
    <property type="evidence" value="ECO:0007669"/>
    <property type="project" value="UniProtKB-KW"/>
</dbReference>
<dbReference type="GO" id="GO:0140318">
    <property type="term" value="F:protein transporter activity"/>
    <property type="evidence" value="ECO:0000266"/>
    <property type="project" value="PomBase"/>
</dbReference>
<dbReference type="GO" id="GO:0045039">
    <property type="term" value="P:protein insertion into mitochondrial inner membrane"/>
    <property type="evidence" value="ECO:0000266"/>
    <property type="project" value="PomBase"/>
</dbReference>
<dbReference type="FunFam" id="1.10.287.810:FF:000003">
    <property type="entry name" value="Mitochondrial import inner membrane translocase subunit TIM8"/>
    <property type="match status" value="1"/>
</dbReference>
<dbReference type="Gene3D" id="1.10.287.810">
    <property type="entry name" value="Mitochondrial import inner membrane translocase subunit tim13 like domains"/>
    <property type="match status" value="1"/>
</dbReference>
<dbReference type="InterPro" id="IPR004217">
    <property type="entry name" value="Tim10-like"/>
</dbReference>
<dbReference type="InterPro" id="IPR035427">
    <property type="entry name" value="Tim10-like_dom_sf"/>
</dbReference>
<dbReference type="Pfam" id="PF02953">
    <property type="entry name" value="zf-Tim10_DDP"/>
    <property type="match status" value="1"/>
</dbReference>
<dbReference type="SUPFAM" id="SSF144122">
    <property type="entry name" value="Tim10-like"/>
    <property type="match status" value="1"/>
</dbReference>
<sequence length="98" mass="11355">MADATKNPIADLSESEQLELSKFIESEQQKVKLQQAIHQFTSTCWPKCIGNIGNKLDKSEEQCLQNCVERFLDCNFHIIKRYALEKFGFLFCWLGFSC</sequence>
<protein>
    <recommendedName>
        <fullName>Mitochondrial import inner membrane translocase subunit tim8</fullName>
    </recommendedName>
</protein>
<reference key="1">
    <citation type="journal article" date="1999" name="FEBS Lett.">
        <title>The mitochondrial TIM22 preprotein translocase is highly conserved throughout the eukaryotic kingdom.</title>
        <authorList>
            <person name="Bauer M.F."/>
            <person name="Rothbauer U."/>
            <person name="Muehlenbein N."/>
            <person name="Smith R.J.H."/>
            <person name="Gerbitz K.-D."/>
            <person name="Neupert W."/>
            <person name="Brunner M."/>
            <person name="Hofmann S."/>
        </authorList>
    </citation>
    <scope>NUCLEOTIDE SEQUENCE [MRNA]</scope>
    <source>
        <strain>972 / ATCC 24843</strain>
    </source>
</reference>
<reference key="2">
    <citation type="journal article" date="2002" name="Nature">
        <title>The genome sequence of Schizosaccharomyces pombe.</title>
        <authorList>
            <person name="Wood V."/>
            <person name="Gwilliam R."/>
            <person name="Rajandream M.A."/>
            <person name="Lyne M.H."/>
            <person name="Lyne R."/>
            <person name="Stewart A."/>
            <person name="Sgouros J.G."/>
            <person name="Peat N."/>
            <person name="Hayles J."/>
            <person name="Baker S.G."/>
            <person name="Basham D."/>
            <person name="Bowman S."/>
            <person name="Brooks K."/>
            <person name="Brown D."/>
            <person name="Brown S."/>
            <person name="Chillingworth T."/>
            <person name="Churcher C.M."/>
            <person name="Collins M."/>
            <person name="Connor R."/>
            <person name="Cronin A."/>
            <person name="Davis P."/>
            <person name="Feltwell T."/>
            <person name="Fraser A."/>
            <person name="Gentles S."/>
            <person name="Goble A."/>
            <person name="Hamlin N."/>
            <person name="Harris D.E."/>
            <person name="Hidalgo J."/>
            <person name="Hodgson G."/>
            <person name="Holroyd S."/>
            <person name="Hornsby T."/>
            <person name="Howarth S."/>
            <person name="Huckle E.J."/>
            <person name="Hunt S."/>
            <person name="Jagels K."/>
            <person name="James K.D."/>
            <person name="Jones L."/>
            <person name="Jones M."/>
            <person name="Leather S."/>
            <person name="McDonald S."/>
            <person name="McLean J."/>
            <person name="Mooney P."/>
            <person name="Moule S."/>
            <person name="Mungall K.L."/>
            <person name="Murphy L.D."/>
            <person name="Niblett D."/>
            <person name="Odell C."/>
            <person name="Oliver K."/>
            <person name="O'Neil S."/>
            <person name="Pearson D."/>
            <person name="Quail M.A."/>
            <person name="Rabbinowitsch E."/>
            <person name="Rutherford K.M."/>
            <person name="Rutter S."/>
            <person name="Saunders D."/>
            <person name="Seeger K."/>
            <person name="Sharp S."/>
            <person name="Skelton J."/>
            <person name="Simmonds M.N."/>
            <person name="Squares R."/>
            <person name="Squares S."/>
            <person name="Stevens K."/>
            <person name="Taylor K."/>
            <person name="Taylor R.G."/>
            <person name="Tivey A."/>
            <person name="Walsh S.V."/>
            <person name="Warren T."/>
            <person name="Whitehead S."/>
            <person name="Woodward J.R."/>
            <person name="Volckaert G."/>
            <person name="Aert R."/>
            <person name="Robben J."/>
            <person name="Grymonprez B."/>
            <person name="Weltjens I."/>
            <person name="Vanstreels E."/>
            <person name="Rieger M."/>
            <person name="Schaefer M."/>
            <person name="Mueller-Auer S."/>
            <person name="Gabel C."/>
            <person name="Fuchs M."/>
            <person name="Duesterhoeft A."/>
            <person name="Fritzc C."/>
            <person name="Holzer E."/>
            <person name="Moestl D."/>
            <person name="Hilbert H."/>
            <person name="Borzym K."/>
            <person name="Langer I."/>
            <person name="Beck A."/>
            <person name="Lehrach H."/>
            <person name="Reinhardt R."/>
            <person name="Pohl T.M."/>
            <person name="Eger P."/>
            <person name="Zimmermann W."/>
            <person name="Wedler H."/>
            <person name="Wambutt R."/>
            <person name="Purnelle B."/>
            <person name="Goffeau A."/>
            <person name="Cadieu E."/>
            <person name="Dreano S."/>
            <person name="Gloux S."/>
            <person name="Lelaure V."/>
            <person name="Mottier S."/>
            <person name="Galibert F."/>
            <person name="Aves S.J."/>
            <person name="Xiang Z."/>
            <person name="Hunt C."/>
            <person name="Moore K."/>
            <person name="Hurst S.M."/>
            <person name="Lucas M."/>
            <person name="Rochet M."/>
            <person name="Gaillardin C."/>
            <person name="Tallada V.A."/>
            <person name="Garzon A."/>
            <person name="Thode G."/>
            <person name="Daga R.R."/>
            <person name="Cruzado L."/>
            <person name="Jimenez J."/>
            <person name="Sanchez M."/>
            <person name="del Rey F."/>
            <person name="Benito J."/>
            <person name="Dominguez A."/>
            <person name="Revuelta J.L."/>
            <person name="Moreno S."/>
            <person name="Armstrong J."/>
            <person name="Forsburg S.L."/>
            <person name="Cerutti L."/>
            <person name="Lowe T."/>
            <person name="McCombie W.R."/>
            <person name="Paulsen I."/>
            <person name="Potashkin J."/>
            <person name="Shpakovski G.V."/>
            <person name="Ussery D."/>
            <person name="Barrell B.G."/>
            <person name="Nurse P."/>
        </authorList>
    </citation>
    <scope>NUCLEOTIDE SEQUENCE [LARGE SCALE GENOMIC DNA]</scope>
    <source>
        <strain>972 / ATCC 24843</strain>
    </source>
</reference>
<gene>
    <name type="primary">tim8</name>
    <name type="ORF">SPAC13G6.04</name>
</gene>
<feature type="chain" id="PRO_0000193593" description="Mitochondrial import inner membrane translocase subunit tim8">
    <location>
        <begin position="1"/>
        <end position="98"/>
    </location>
</feature>
<feature type="short sequence motif" description="Twin CX3C motif">
    <location>
        <begin position="44"/>
        <end position="67"/>
    </location>
</feature>
<feature type="disulfide bond" evidence="1">
    <location>
        <begin position="44"/>
        <end position="67"/>
    </location>
</feature>
<feature type="disulfide bond" evidence="1">
    <location>
        <begin position="48"/>
        <end position="63"/>
    </location>
</feature>
<accession>Q09783</accession>
<organism>
    <name type="scientific">Schizosaccharomyces pombe (strain 972 / ATCC 24843)</name>
    <name type="common">Fission yeast</name>
    <dbReference type="NCBI Taxonomy" id="284812"/>
    <lineage>
        <taxon>Eukaryota</taxon>
        <taxon>Fungi</taxon>
        <taxon>Dikarya</taxon>
        <taxon>Ascomycota</taxon>
        <taxon>Taphrinomycotina</taxon>
        <taxon>Schizosaccharomycetes</taxon>
        <taxon>Schizosaccharomycetales</taxon>
        <taxon>Schizosaccharomycetaceae</taxon>
        <taxon>Schizosaccharomyces</taxon>
    </lineage>
</organism>
<evidence type="ECO:0000250" key="1"/>
<evidence type="ECO:0000305" key="2"/>
<proteinExistence type="inferred from homology"/>
<keyword id="KW-0143">Chaperone</keyword>
<keyword id="KW-1015">Disulfide bond</keyword>
<keyword id="KW-0472">Membrane</keyword>
<keyword id="KW-0479">Metal-binding</keyword>
<keyword id="KW-0496">Mitochondrion</keyword>
<keyword id="KW-0999">Mitochondrion inner membrane</keyword>
<keyword id="KW-0653">Protein transport</keyword>
<keyword id="KW-1185">Reference proteome</keyword>
<keyword id="KW-0811">Translocation</keyword>
<keyword id="KW-0813">Transport</keyword>
<keyword id="KW-0862">Zinc</keyword>
<comment type="function">
    <text evidence="1">Mitochondrial intermembrane chaperone that participates in the import and insertion of some multi-pass transmembrane proteins into the mitochondrial inner membrane. Also required for the transfer of beta-barrel precursors from the TOM complex to the sorting and assembly machinery (SAM complex) of the outer membrane. Acts as a chaperone-like protein that protects the hydrophobic precursors from aggregation and guide them through the mitochondrial intermembrane space. The TIM8-TIM13 complex is non essential and only mediates the import of few proteins, while the predominant TIM9-TIM10 70 kDa complex is crucial and mediates the import of much more proteins (By similarity).</text>
</comment>
<comment type="subunit">
    <text evidence="1">Heterohexamer; composed of 3 copies of TIM8 and 3 copies of TIM13, named soluble 70 kDa complex. Associates with the TIM22 complex, whose core is composed of TIM22 and TIM54. Interacts with the transmembrane regions of multi-pass transmembrane proteins in transit (By similarity).</text>
</comment>
<comment type="subcellular location">
    <subcellularLocation>
        <location evidence="1">Mitochondrion inner membrane</location>
        <topology evidence="1">Peripheral membrane protein</topology>
        <orientation evidence="1">Intermembrane side</orientation>
    </subcellularLocation>
</comment>
<comment type="domain">
    <text evidence="1">The twin CX3C motif contains 4 conserved Cys residues that form 2 disulfide bonds in the mitochondrial intermembrane space. However, during the transit of TIM8 from cytoplasm into mitochondrion, the Cys residues probably coordinate zinc, thereby preventing folding and allowing its transfer across mitochondrial outer membrane (By similarity).</text>
</comment>
<comment type="similarity">
    <text evidence="2">Belongs to the small Tim family.</text>
</comment>
<comment type="sequence caution" evidence="2">
    <conflict type="erroneous gene model prediction">
        <sequence resource="EMBL-CDS" id="CAA91097"/>
    </conflict>
</comment>
<name>TIM8_SCHPO</name>